<reference key="1">
    <citation type="journal article" date="2009" name="Science">
        <title>The dynamics and time scale of ongoing genomic erosion in symbiotic bacteria.</title>
        <authorList>
            <person name="Moran N.A."/>
            <person name="McLaughlin H.J."/>
            <person name="Sorek R."/>
        </authorList>
    </citation>
    <scope>NUCLEOTIDE SEQUENCE [LARGE SCALE GENOMIC DNA]</scope>
    <source>
        <strain>Tuc7</strain>
    </source>
</reference>
<accession>B8D7U7</accession>
<feature type="chain" id="PRO_1000132990" description="Enolase">
    <location>
        <begin position="1"/>
        <end position="434"/>
    </location>
</feature>
<feature type="active site" description="Proton donor" evidence="1">
    <location>
        <position position="209"/>
    </location>
</feature>
<feature type="active site" description="Proton acceptor" evidence="1">
    <location>
        <position position="343"/>
    </location>
</feature>
<feature type="binding site" evidence="1">
    <location>
        <position position="167"/>
    </location>
    <ligand>
        <name>(2R)-2-phosphoglycerate</name>
        <dbReference type="ChEBI" id="CHEBI:58289"/>
    </ligand>
</feature>
<feature type="binding site" evidence="1">
    <location>
        <position position="246"/>
    </location>
    <ligand>
        <name>Mg(2+)</name>
        <dbReference type="ChEBI" id="CHEBI:18420"/>
    </ligand>
</feature>
<feature type="binding site" evidence="1">
    <location>
        <position position="291"/>
    </location>
    <ligand>
        <name>Mg(2+)</name>
        <dbReference type="ChEBI" id="CHEBI:18420"/>
    </ligand>
</feature>
<feature type="binding site" evidence="1">
    <location>
        <position position="318"/>
    </location>
    <ligand>
        <name>Mg(2+)</name>
        <dbReference type="ChEBI" id="CHEBI:18420"/>
    </ligand>
</feature>
<feature type="binding site" evidence="1">
    <location>
        <position position="343"/>
    </location>
    <ligand>
        <name>(2R)-2-phosphoglycerate</name>
        <dbReference type="ChEBI" id="CHEBI:58289"/>
    </ligand>
</feature>
<feature type="binding site" evidence="1">
    <location>
        <position position="372"/>
    </location>
    <ligand>
        <name>(2R)-2-phosphoglycerate</name>
        <dbReference type="ChEBI" id="CHEBI:58289"/>
    </ligand>
</feature>
<feature type="binding site" evidence="1">
    <location>
        <position position="373"/>
    </location>
    <ligand>
        <name>(2R)-2-phosphoglycerate</name>
        <dbReference type="ChEBI" id="CHEBI:58289"/>
    </ligand>
</feature>
<feature type="binding site" evidence="1">
    <location>
        <position position="394"/>
    </location>
    <ligand>
        <name>(2R)-2-phosphoglycerate</name>
        <dbReference type="ChEBI" id="CHEBI:58289"/>
    </ligand>
</feature>
<protein>
    <recommendedName>
        <fullName evidence="1">Enolase</fullName>
        <ecNumber evidence="1">4.2.1.11</ecNumber>
    </recommendedName>
    <alternativeName>
        <fullName evidence="1">2-phospho-D-glycerate hydro-lyase</fullName>
    </alternativeName>
    <alternativeName>
        <fullName evidence="1">2-phosphoglycerate dehydratase</fullName>
    </alternativeName>
</protein>
<keyword id="KW-0963">Cytoplasm</keyword>
<keyword id="KW-0324">Glycolysis</keyword>
<keyword id="KW-0456">Lyase</keyword>
<keyword id="KW-0460">Magnesium</keyword>
<keyword id="KW-0479">Metal-binding</keyword>
<keyword id="KW-0964">Secreted</keyword>
<dbReference type="EC" id="4.2.1.11" evidence="1"/>
<dbReference type="EMBL" id="CP001158">
    <property type="protein sequence ID" value="ACL30212.1"/>
    <property type="molecule type" value="Genomic_DNA"/>
</dbReference>
<dbReference type="RefSeq" id="WP_009874370.1">
    <property type="nucleotide sequence ID" value="NC_011834.1"/>
</dbReference>
<dbReference type="SMR" id="B8D7U7"/>
<dbReference type="KEGG" id="bau:BUAPTUC7_411"/>
<dbReference type="HOGENOM" id="CLU_031223_2_1_6"/>
<dbReference type="UniPathway" id="UPA00109">
    <property type="reaction ID" value="UER00187"/>
</dbReference>
<dbReference type="GO" id="GO:0009986">
    <property type="term" value="C:cell surface"/>
    <property type="evidence" value="ECO:0007669"/>
    <property type="project" value="UniProtKB-SubCell"/>
</dbReference>
<dbReference type="GO" id="GO:0005576">
    <property type="term" value="C:extracellular region"/>
    <property type="evidence" value="ECO:0007669"/>
    <property type="project" value="UniProtKB-SubCell"/>
</dbReference>
<dbReference type="GO" id="GO:0000015">
    <property type="term" value="C:phosphopyruvate hydratase complex"/>
    <property type="evidence" value="ECO:0007669"/>
    <property type="project" value="InterPro"/>
</dbReference>
<dbReference type="GO" id="GO:0000287">
    <property type="term" value="F:magnesium ion binding"/>
    <property type="evidence" value="ECO:0007669"/>
    <property type="project" value="UniProtKB-UniRule"/>
</dbReference>
<dbReference type="GO" id="GO:0004634">
    <property type="term" value="F:phosphopyruvate hydratase activity"/>
    <property type="evidence" value="ECO:0007669"/>
    <property type="project" value="UniProtKB-UniRule"/>
</dbReference>
<dbReference type="GO" id="GO:0006096">
    <property type="term" value="P:glycolytic process"/>
    <property type="evidence" value="ECO:0007669"/>
    <property type="project" value="UniProtKB-UniRule"/>
</dbReference>
<dbReference type="CDD" id="cd03313">
    <property type="entry name" value="enolase"/>
    <property type="match status" value="1"/>
</dbReference>
<dbReference type="FunFam" id="3.20.20.120:FF:000001">
    <property type="entry name" value="Enolase"/>
    <property type="match status" value="1"/>
</dbReference>
<dbReference type="FunFam" id="3.30.390.10:FF:000001">
    <property type="entry name" value="Enolase"/>
    <property type="match status" value="1"/>
</dbReference>
<dbReference type="Gene3D" id="3.20.20.120">
    <property type="entry name" value="Enolase-like C-terminal domain"/>
    <property type="match status" value="1"/>
</dbReference>
<dbReference type="Gene3D" id="3.30.390.10">
    <property type="entry name" value="Enolase-like, N-terminal domain"/>
    <property type="match status" value="1"/>
</dbReference>
<dbReference type="HAMAP" id="MF_00318">
    <property type="entry name" value="Enolase"/>
    <property type="match status" value="1"/>
</dbReference>
<dbReference type="InterPro" id="IPR000941">
    <property type="entry name" value="Enolase"/>
</dbReference>
<dbReference type="InterPro" id="IPR036849">
    <property type="entry name" value="Enolase-like_C_sf"/>
</dbReference>
<dbReference type="InterPro" id="IPR029017">
    <property type="entry name" value="Enolase-like_N"/>
</dbReference>
<dbReference type="InterPro" id="IPR020810">
    <property type="entry name" value="Enolase_C"/>
</dbReference>
<dbReference type="InterPro" id="IPR020809">
    <property type="entry name" value="Enolase_CS"/>
</dbReference>
<dbReference type="InterPro" id="IPR020811">
    <property type="entry name" value="Enolase_N"/>
</dbReference>
<dbReference type="NCBIfam" id="TIGR01060">
    <property type="entry name" value="eno"/>
    <property type="match status" value="1"/>
</dbReference>
<dbReference type="PANTHER" id="PTHR11902">
    <property type="entry name" value="ENOLASE"/>
    <property type="match status" value="1"/>
</dbReference>
<dbReference type="PANTHER" id="PTHR11902:SF1">
    <property type="entry name" value="ENOLASE"/>
    <property type="match status" value="1"/>
</dbReference>
<dbReference type="Pfam" id="PF00113">
    <property type="entry name" value="Enolase_C"/>
    <property type="match status" value="1"/>
</dbReference>
<dbReference type="Pfam" id="PF03952">
    <property type="entry name" value="Enolase_N"/>
    <property type="match status" value="1"/>
</dbReference>
<dbReference type="PIRSF" id="PIRSF001400">
    <property type="entry name" value="Enolase"/>
    <property type="match status" value="1"/>
</dbReference>
<dbReference type="PRINTS" id="PR00148">
    <property type="entry name" value="ENOLASE"/>
</dbReference>
<dbReference type="SFLD" id="SFLDS00001">
    <property type="entry name" value="Enolase"/>
    <property type="match status" value="1"/>
</dbReference>
<dbReference type="SFLD" id="SFLDF00002">
    <property type="entry name" value="enolase"/>
    <property type="match status" value="1"/>
</dbReference>
<dbReference type="SMART" id="SM01192">
    <property type="entry name" value="Enolase_C"/>
    <property type="match status" value="1"/>
</dbReference>
<dbReference type="SMART" id="SM01193">
    <property type="entry name" value="Enolase_N"/>
    <property type="match status" value="1"/>
</dbReference>
<dbReference type="SUPFAM" id="SSF51604">
    <property type="entry name" value="Enolase C-terminal domain-like"/>
    <property type="match status" value="1"/>
</dbReference>
<dbReference type="SUPFAM" id="SSF54826">
    <property type="entry name" value="Enolase N-terminal domain-like"/>
    <property type="match status" value="1"/>
</dbReference>
<dbReference type="PROSITE" id="PS00164">
    <property type="entry name" value="ENOLASE"/>
    <property type="match status" value="1"/>
</dbReference>
<name>ENO_BUCAT</name>
<comment type="function">
    <text evidence="1">Catalyzes the reversible conversion of 2-phosphoglycerate (2-PG) into phosphoenolpyruvate (PEP). It is essential for the degradation of carbohydrates via glycolysis.</text>
</comment>
<comment type="catalytic activity">
    <reaction evidence="1">
        <text>(2R)-2-phosphoglycerate = phosphoenolpyruvate + H2O</text>
        <dbReference type="Rhea" id="RHEA:10164"/>
        <dbReference type="ChEBI" id="CHEBI:15377"/>
        <dbReference type="ChEBI" id="CHEBI:58289"/>
        <dbReference type="ChEBI" id="CHEBI:58702"/>
        <dbReference type="EC" id="4.2.1.11"/>
    </reaction>
</comment>
<comment type="cofactor">
    <cofactor evidence="1">
        <name>Mg(2+)</name>
        <dbReference type="ChEBI" id="CHEBI:18420"/>
    </cofactor>
    <text evidence="1">Binds a second Mg(2+) ion via substrate during catalysis.</text>
</comment>
<comment type="pathway">
    <text evidence="1">Carbohydrate degradation; glycolysis; pyruvate from D-glyceraldehyde 3-phosphate: step 4/5.</text>
</comment>
<comment type="subunit">
    <text evidence="1">Component of the RNA degradosome, a multiprotein complex involved in RNA processing and mRNA degradation.</text>
</comment>
<comment type="subcellular location">
    <subcellularLocation>
        <location evidence="1">Cytoplasm</location>
    </subcellularLocation>
    <subcellularLocation>
        <location evidence="1">Secreted</location>
    </subcellularLocation>
    <subcellularLocation>
        <location evidence="1">Cell surface</location>
    </subcellularLocation>
    <text evidence="1">Fractions of enolase are present in both the cytoplasm and on the cell surface.</text>
</comment>
<comment type="similarity">
    <text evidence="1">Belongs to the enolase family.</text>
</comment>
<proteinExistence type="inferred from homology"/>
<organism>
    <name type="scientific">Buchnera aphidicola subsp. Acyrthosiphon pisum (strain Tuc7)</name>
    <dbReference type="NCBI Taxonomy" id="561501"/>
    <lineage>
        <taxon>Bacteria</taxon>
        <taxon>Pseudomonadati</taxon>
        <taxon>Pseudomonadota</taxon>
        <taxon>Gammaproteobacteria</taxon>
        <taxon>Enterobacterales</taxon>
        <taxon>Erwiniaceae</taxon>
        <taxon>Buchnera</taxon>
    </lineage>
</organism>
<gene>
    <name evidence="1" type="primary">eno</name>
    <name type="ordered locus">BUAPTUC7_411</name>
</gene>
<sequence>MSKITKIIAREIIDSRGNPTVESEVHLEGGFVGLASSPSGASTGSLEALELRDENKDRFMGKGVEKAVSLINEKISIALKNKNARNQSDIDHIMIDLDGTINKSKLGANAILSVSLAVAKAAAASKRMPLYAHIAEINETPGVFSMPLPMINIINGGKHANNNIDIQEFMIQPISAKTVKESIRIGCEIFHALGELLKEKGMSTTVGDEGGYAPNLKSNEEALNIIQDAIQKTKYKLGQDIRLAIDCAASELYNKNEKKYNLKGENISFSSKEFTHYLEKLSQKYPIVSIEDGQDESDWEGFLYQTHVLGHKIQLVGDDLFVTNKNILKKGIKKGIANSILIKLNQIGTLTETLEAIKTAKQANYGVIISHRSGETEDASIADLSVGTSSGQIKTGSMSRSDRTSKYNQLIRIEENLGTKYAPFHGLREIKSAF</sequence>
<evidence type="ECO:0000255" key="1">
    <source>
        <dbReference type="HAMAP-Rule" id="MF_00318"/>
    </source>
</evidence>